<feature type="chain" id="PRO_0000209323" description="Sugar efflux transporter">
    <location>
        <begin position="1"/>
        <end position="396"/>
    </location>
</feature>
<feature type="topological domain" description="Cytoplasmic" evidence="1">
    <location>
        <begin position="1"/>
        <end position="14"/>
    </location>
</feature>
<feature type="transmembrane region" description="Helical" evidence="1">
    <location>
        <begin position="15"/>
        <end position="35"/>
    </location>
</feature>
<feature type="topological domain" description="Periplasmic" evidence="1">
    <location>
        <begin position="36"/>
        <end position="49"/>
    </location>
</feature>
<feature type="transmembrane region" description="Helical" evidence="1">
    <location>
        <begin position="50"/>
        <end position="70"/>
    </location>
</feature>
<feature type="topological domain" description="Cytoplasmic" evidence="1">
    <location>
        <begin position="71"/>
        <end position="80"/>
    </location>
</feature>
<feature type="transmembrane region" description="Helical" evidence="1">
    <location>
        <begin position="81"/>
        <end position="101"/>
    </location>
</feature>
<feature type="topological domain" description="Periplasmic" evidence="1">
    <location>
        <position position="102"/>
    </location>
</feature>
<feature type="transmembrane region" description="Helical" evidence="1">
    <location>
        <begin position="103"/>
        <end position="123"/>
    </location>
</feature>
<feature type="topological domain" description="Cytoplasmic" evidence="1">
    <location>
        <begin position="124"/>
        <end position="135"/>
    </location>
</feature>
<feature type="transmembrane region" description="Helical" evidence="1">
    <location>
        <begin position="136"/>
        <end position="156"/>
    </location>
</feature>
<feature type="topological domain" description="Periplasmic" evidence="1">
    <location>
        <begin position="157"/>
        <end position="169"/>
    </location>
</feature>
<feature type="transmembrane region" description="Helical" evidence="1">
    <location>
        <begin position="170"/>
        <end position="190"/>
    </location>
</feature>
<feature type="topological domain" description="Cytoplasmic" evidence="1">
    <location>
        <begin position="191"/>
        <end position="208"/>
    </location>
</feature>
<feature type="transmembrane region" description="Helical" evidence="1">
    <location>
        <begin position="209"/>
        <end position="229"/>
    </location>
</feature>
<feature type="topological domain" description="Periplasmic" evidence="1">
    <location>
        <begin position="230"/>
        <end position="245"/>
    </location>
</feature>
<feature type="transmembrane region" description="Helical" evidence="1">
    <location>
        <begin position="246"/>
        <end position="266"/>
    </location>
</feature>
<feature type="topological domain" description="Cytoplasmic" evidence="1">
    <location>
        <begin position="267"/>
        <end position="274"/>
    </location>
</feature>
<feature type="transmembrane region" description="Helical" evidence="1">
    <location>
        <begin position="275"/>
        <end position="295"/>
    </location>
</feature>
<feature type="topological domain" description="Periplasmic" evidence="1">
    <location>
        <begin position="296"/>
        <end position="298"/>
    </location>
</feature>
<feature type="transmembrane region" description="Helical" evidence="1">
    <location>
        <begin position="299"/>
        <end position="319"/>
    </location>
</feature>
<feature type="topological domain" description="Cytoplasmic" evidence="1">
    <location>
        <begin position="320"/>
        <end position="332"/>
    </location>
</feature>
<feature type="transmembrane region" description="Helical" evidence="1">
    <location>
        <begin position="333"/>
        <end position="353"/>
    </location>
</feature>
<feature type="topological domain" description="Periplasmic" evidence="1">
    <location>
        <begin position="354"/>
        <end position="363"/>
    </location>
</feature>
<feature type="transmembrane region" description="Helical" evidence="1">
    <location>
        <begin position="364"/>
        <end position="384"/>
    </location>
</feature>
<feature type="topological domain" description="Cytoplasmic" evidence="1">
    <location>
        <begin position="385"/>
        <end position="396"/>
    </location>
</feature>
<feature type="helix" evidence="4">
    <location>
        <begin position="10"/>
        <end position="30"/>
    </location>
</feature>
<feature type="helix" evidence="4">
    <location>
        <begin position="31"/>
        <end position="34"/>
    </location>
</feature>
<feature type="helix" evidence="4">
    <location>
        <begin position="36"/>
        <end position="43"/>
    </location>
</feature>
<feature type="helix" evidence="4">
    <location>
        <begin position="47"/>
        <end position="50"/>
    </location>
</feature>
<feature type="helix" evidence="4">
    <location>
        <begin position="52"/>
        <end position="71"/>
    </location>
</feature>
<feature type="turn" evidence="4">
    <location>
        <begin position="72"/>
        <end position="74"/>
    </location>
</feature>
<feature type="helix" evidence="4">
    <location>
        <begin position="77"/>
        <end position="96"/>
    </location>
</feature>
<feature type="helix" evidence="4">
    <location>
        <begin position="101"/>
        <end position="128"/>
    </location>
</feature>
<feature type="helix" evidence="4">
    <location>
        <begin position="136"/>
        <end position="151"/>
    </location>
</feature>
<feature type="helix" evidence="4">
    <location>
        <begin position="153"/>
        <end position="164"/>
    </location>
</feature>
<feature type="helix" evidence="4">
    <location>
        <begin position="166"/>
        <end position="187"/>
    </location>
</feature>
<feature type="helix" evidence="4">
    <location>
        <begin position="201"/>
        <end position="206"/>
    </location>
</feature>
<feature type="helix" evidence="4">
    <location>
        <begin position="209"/>
        <end position="229"/>
    </location>
</feature>
<feature type="helix" evidence="4">
    <location>
        <begin position="232"/>
        <end position="238"/>
    </location>
</feature>
<feature type="helix" evidence="4">
    <location>
        <begin position="244"/>
        <end position="294"/>
    </location>
</feature>
<feature type="helix" evidence="4">
    <location>
        <begin position="298"/>
        <end position="326"/>
    </location>
</feature>
<feature type="helix" evidence="4">
    <location>
        <begin position="328"/>
        <end position="330"/>
    </location>
</feature>
<feature type="helix" evidence="4">
    <location>
        <begin position="331"/>
        <end position="359"/>
    </location>
</feature>
<feature type="helix" evidence="4">
    <location>
        <begin position="362"/>
        <end position="364"/>
    </location>
</feature>
<feature type="helix" evidence="4">
    <location>
        <begin position="365"/>
        <end position="386"/>
    </location>
</feature>
<feature type="strand" evidence="3">
    <location>
        <begin position="389"/>
        <end position="391"/>
    </location>
</feature>
<sequence length="396" mass="42538">MTTNTVSRKVAWLRVVTLAVAAFIFNTTEFVPVGLLSDIAQSFHMQTAQVGIMLTIYAWVVALMSLPFMLMTSQVERRKLLICLFVVFIASHVLSFLSWSFTVLVISRIGVAFAHAIFWSITASLAIRMAPAGKRAQALSLIATGTALAMVLGLPLGRIVGQYFGWRMTFFAIGIGALITLLCLIKLLPLLPSEHSGSLKSLPLLFRRPALMSIYLLTVVVVTAHYTAYSYIEPFVQNIAGFSANFATALLLLLGGAGIIGSVIFGKLGNQYASALVSTAIALLLVCLALLLPAANSEIHLGVLSIFWGIAMMIIGLGMQVKVLALAPDATDVAMALFSGIFNIGIGAGALVGNQVSLHWSMSMIGYVGAVPAFAALIWSIIIFRRWPVTLEEQTQ</sequence>
<proteinExistence type="evidence at protein level"/>
<reference key="1">
    <citation type="journal article" date="1996" name="DNA Res.">
        <title>A 570-kb DNA sequence of the Escherichia coli K-12 genome corresponding to the 28.0-40.1 min region on the linkage map.</title>
        <authorList>
            <person name="Aiba H."/>
            <person name="Baba T."/>
            <person name="Fujita K."/>
            <person name="Hayashi K."/>
            <person name="Inada T."/>
            <person name="Isono K."/>
            <person name="Itoh T."/>
            <person name="Kasai H."/>
            <person name="Kashimoto K."/>
            <person name="Kimura S."/>
            <person name="Kitakawa M."/>
            <person name="Kitagawa M."/>
            <person name="Makino K."/>
            <person name="Miki T."/>
            <person name="Mizobuchi K."/>
            <person name="Mori H."/>
            <person name="Mori T."/>
            <person name="Motomura K."/>
            <person name="Nakade S."/>
            <person name="Nakamura Y."/>
            <person name="Nashimoto H."/>
            <person name="Nishio Y."/>
            <person name="Oshima T."/>
            <person name="Saito N."/>
            <person name="Sampei G."/>
            <person name="Seki Y."/>
            <person name="Sivasundaram S."/>
            <person name="Tagami H."/>
            <person name="Takeda J."/>
            <person name="Takemoto K."/>
            <person name="Takeuchi Y."/>
            <person name="Wada C."/>
            <person name="Yamamoto Y."/>
            <person name="Horiuchi T."/>
        </authorList>
    </citation>
    <scope>NUCLEOTIDE SEQUENCE [LARGE SCALE GENOMIC DNA]</scope>
    <source>
        <strain>K12 / W3110 / ATCC 27325 / DSM 5911</strain>
    </source>
</reference>
<reference key="2">
    <citation type="journal article" date="1997" name="Science">
        <title>The complete genome sequence of Escherichia coli K-12.</title>
        <authorList>
            <person name="Blattner F.R."/>
            <person name="Plunkett G. III"/>
            <person name="Bloch C.A."/>
            <person name="Perna N.T."/>
            <person name="Burland V."/>
            <person name="Riley M."/>
            <person name="Collado-Vides J."/>
            <person name="Glasner J.D."/>
            <person name="Rode C.K."/>
            <person name="Mayhew G.F."/>
            <person name="Gregor J."/>
            <person name="Davis N.W."/>
            <person name="Kirkpatrick H.A."/>
            <person name="Goeden M.A."/>
            <person name="Rose D.J."/>
            <person name="Mau B."/>
            <person name="Shao Y."/>
        </authorList>
    </citation>
    <scope>NUCLEOTIDE SEQUENCE [LARGE SCALE GENOMIC DNA]</scope>
    <source>
        <strain>K12 / MG1655 / ATCC 47076</strain>
    </source>
</reference>
<reference key="3">
    <citation type="journal article" date="2006" name="Mol. Syst. Biol.">
        <title>Highly accurate genome sequences of Escherichia coli K-12 strains MG1655 and W3110.</title>
        <authorList>
            <person name="Hayashi K."/>
            <person name="Morooka N."/>
            <person name="Yamamoto Y."/>
            <person name="Fujita K."/>
            <person name="Isono K."/>
            <person name="Choi S."/>
            <person name="Ohtsubo E."/>
            <person name="Baba T."/>
            <person name="Wanner B.L."/>
            <person name="Mori H."/>
            <person name="Horiuchi T."/>
        </authorList>
    </citation>
    <scope>NUCLEOTIDE SEQUENCE [LARGE SCALE GENOMIC DNA]</scope>
    <source>
        <strain>K12 / W3110 / ATCC 27325 / DSM 5911</strain>
    </source>
</reference>
<reference key="4">
    <citation type="journal article" date="1993" name="J. Bacteriol.">
        <title>Genetic and functional analysis of the multiple antibiotic resistance (mar) locus in Escherichia coli.</title>
        <authorList>
            <person name="Cohen S.P."/>
            <person name="Haechler H."/>
            <person name="Levy S.B."/>
        </authorList>
    </citation>
    <scope>NUCLEOTIDE SEQUENCE [GENOMIC DNA] OF 217-396</scope>
</reference>
<reference key="5">
    <citation type="journal article" date="1999" name="J. Bacteriol.">
        <title>Transcriptional activation of ydeA, which encodes a member of the major facilitator superfamily, interferes with arabinose accumulation and induction of the Escherichia coli arabinose PBAD promoter.</title>
        <authorList>
            <person name="Bost S."/>
            <person name="Silva F."/>
            <person name="Belin D."/>
        </authorList>
    </citation>
    <scope>CHARACTERIZATION</scope>
    <source>
        <strain>SB0</strain>
    </source>
</reference>
<reference key="6">
    <citation type="journal article" date="1999" name="J. Bacteriol.">
        <title>Escherichia coli gene ydeA encodes a major facilitator pump which exports L-arabinose and isopropyl-beta-D-thiogalactopyranoside.</title>
        <authorList>
            <person name="Carole S."/>
            <person name="Pichoff S."/>
            <person name="Bouche J.-P."/>
        </authorList>
    </citation>
    <scope>CHARACTERIZATION</scope>
    <source>
        <strain>JS219</strain>
    </source>
</reference>
<reference key="7">
    <citation type="journal article" date="2005" name="Science">
        <title>Global topology analysis of the Escherichia coli inner membrane proteome.</title>
        <authorList>
            <person name="Daley D.O."/>
            <person name="Rapp M."/>
            <person name="Granseth E."/>
            <person name="Melen K."/>
            <person name="Drew D."/>
            <person name="von Heijne G."/>
        </authorList>
    </citation>
    <scope>TOPOLOGY [LARGE SCALE ANALYSIS]</scope>
    <source>
        <strain>K12 / MG1655 / ATCC 47076</strain>
    </source>
</reference>
<accession>P31122</accession>
<accession>P76883</accession>
<accession>P77353</accession>
<protein>
    <recommendedName>
        <fullName>Sugar efflux transporter</fullName>
    </recommendedName>
</protein>
<organism>
    <name type="scientific">Escherichia coli (strain K12)</name>
    <dbReference type="NCBI Taxonomy" id="83333"/>
    <lineage>
        <taxon>Bacteria</taxon>
        <taxon>Pseudomonadati</taxon>
        <taxon>Pseudomonadota</taxon>
        <taxon>Gammaproteobacteria</taxon>
        <taxon>Enterobacterales</taxon>
        <taxon>Enterobacteriaceae</taxon>
        <taxon>Escherichia</taxon>
    </lineage>
</organism>
<name>SOTB_ECOLI</name>
<dbReference type="EMBL" id="U00096">
    <property type="protein sequence ID" value="AAC74601.1"/>
    <property type="molecule type" value="Genomic_DNA"/>
</dbReference>
<dbReference type="EMBL" id="AP009048">
    <property type="protein sequence ID" value="BAA15210.1"/>
    <property type="molecule type" value="Genomic_DNA"/>
</dbReference>
<dbReference type="EMBL" id="M96235">
    <property type="status" value="NOT_ANNOTATED_CDS"/>
    <property type="molecule type" value="Genomic_DNA"/>
</dbReference>
<dbReference type="PIR" id="C64907">
    <property type="entry name" value="C64907"/>
</dbReference>
<dbReference type="RefSeq" id="NP_416045.1">
    <property type="nucleotide sequence ID" value="NC_000913.3"/>
</dbReference>
<dbReference type="RefSeq" id="WP_000210799.1">
    <property type="nucleotide sequence ID" value="NZ_SSZK01000001.1"/>
</dbReference>
<dbReference type="PDB" id="6KKI">
    <property type="method" value="X-ray"/>
    <property type="resolution" value="3.06 A"/>
    <property type="chains" value="A=1-396"/>
</dbReference>
<dbReference type="PDB" id="6KKJ">
    <property type="method" value="X-ray"/>
    <property type="resolution" value="3.38 A"/>
    <property type="chains" value="B=1-396"/>
</dbReference>
<dbReference type="PDB" id="6KKK">
    <property type="method" value="X-ray"/>
    <property type="resolution" value="3.50 A"/>
    <property type="chains" value="A/B/C=1-396"/>
</dbReference>
<dbReference type="PDB" id="6KKL">
    <property type="method" value="X-ray"/>
    <property type="resolution" value="2.65 A"/>
    <property type="chains" value="A=1-396"/>
</dbReference>
<dbReference type="PDBsum" id="6KKI"/>
<dbReference type="PDBsum" id="6KKJ"/>
<dbReference type="PDBsum" id="6KKK"/>
<dbReference type="PDBsum" id="6KKL"/>
<dbReference type="SMR" id="P31122"/>
<dbReference type="BioGRID" id="4259471">
    <property type="interactions" value="243"/>
</dbReference>
<dbReference type="FunCoup" id="P31122">
    <property type="interactions" value="96"/>
</dbReference>
<dbReference type="STRING" id="511145.b1528"/>
<dbReference type="TCDB" id="2.A.1.2.15">
    <property type="family name" value="the major facilitator superfamily (mfs)"/>
</dbReference>
<dbReference type="PaxDb" id="511145-b1528"/>
<dbReference type="EnsemblBacteria" id="AAC74601">
    <property type="protein sequence ID" value="AAC74601"/>
    <property type="gene ID" value="b1528"/>
</dbReference>
<dbReference type="GeneID" id="93775692"/>
<dbReference type="GeneID" id="947218"/>
<dbReference type="KEGG" id="ecj:JW1521"/>
<dbReference type="KEGG" id="eco:b1528"/>
<dbReference type="KEGG" id="ecoc:C3026_08830"/>
<dbReference type="PATRIC" id="fig|1411691.4.peg.738"/>
<dbReference type="EchoBASE" id="EB1592"/>
<dbReference type="eggNOG" id="COG2814">
    <property type="taxonomic scope" value="Bacteria"/>
</dbReference>
<dbReference type="HOGENOM" id="CLU_001265_61_1_6"/>
<dbReference type="InParanoid" id="P31122"/>
<dbReference type="OMA" id="YTYLSPY"/>
<dbReference type="OrthoDB" id="9788453at2"/>
<dbReference type="PhylomeDB" id="P31122"/>
<dbReference type="BioCyc" id="EcoCyc:YDEA-MONOMER"/>
<dbReference type="BioCyc" id="MetaCyc:YDEA-MONOMER"/>
<dbReference type="PRO" id="PR:P31122"/>
<dbReference type="Proteomes" id="UP000000625">
    <property type="component" value="Chromosome"/>
</dbReference>
<dbReference type="GO" id="GO:0005886">
    <property type="term" value="C:plasma membrane"/>
    <property type="evidence" value="ECO:0000314"/>
    <property type="project" value="EcoCyc"/>
</dbReference>
<dbReference type="GO" id="GO:0015144">
    <property type="term" value="F:carbohydrate transmembrane transporter activity"/>
    <property type="evidence" value="ECO:0007669"/>
    <property type="project" value="UniProtKB-UniRule"/>
</dbReference>
<dbReference type="GO" id="GO:0022857">
    <property type="term" value="F:transmembrane transporter activity"/>
    <property type="evidence" value="ECO:0000318"/>
    <property type="project" value="GO_Central"/>
</dbReference>
<dbReference type="GO" id="GO:0055085">
    <property type="term" value="P:transmembrane transport"/>
    <property type="evidence" value="ECO:0000318"/>
    <property type="project" value="GO_Central"/>
</dbReference>
<dbReference type="CDD" id="cd17324">
    <property type="entry name" value="MFS_NepI_like"/>
    <property type="match status" value="1"/>
</dbReference>
<dbReference type="FunFam" id="1.20.1250.20:FF:000079">
    <property type="entry name" value="Probable sugar efflux transporter"/>
    <property type="match status" value="1"/>
</dbReference>
<dbReference type="Gene3D" id="1.20.1250.20">
    <property type="entry name" value="MFS general substrate transporter like domains"/>
    <property type="match status" value="1"/>
</dbReference>
<dbReference type="HAMAP" id="MF_00517">
    <property type="entry name" value="MFS_SotB"/>
    <property type="match status" value="1"/>
</dbReference>
<dbReference type="InterPro" id="IPR011701">
    <property type="entry name" value="MFS"/>
</dbReference>
<dbReference type="InterPro" id="IPR020846">
    <property type="entry name" value="MFS_dom"/>
</dbReference>
<dbReference type="InterPro" id="IPR050189">
    <property type="entry name" value="MFS_Efflux_Transporters"/>
</dbReference>
<dbReference type="InterPro" id="IPR036259">
    <property type="entry name" value="MFS_trans_sf"/>
</dbReference>
<dbReference type="InterPro" id="IPR023495">
    <property type="entry name" value="Sugar_effux_transptr_put"/>
</dbReference>
<dbReference type="NCBIfam" id="NF002921">
    <property type="entry name" value="PRK03545.1"/>
    <property type="match status" value="1"/>
</dbReference>
<dbReference type="PANTHER" id="PTHR43124">
    <property type="entry name" value="PURINE EFFLUX PUMP PBUE"/>
    <property type="match status" value="1"/>
</dbReference>
<dbReference type="PANTHER" id="PTHR43124:SF4">
    <property type="entry name" value="SUGAR EFFLUX TRANSPORTER"/>
    <property type="match status" value="1"/>
</dbReference>
<dbReference type="Pfam" id="PF07690">
    <property type="entry name" value="MFS_1"/>
    <property type="match status" value="1"/>
</dbReference>
<dbReference type="SUPFAM" id="SSF103473">
    <property type="entry name" value="MFS general substrate transporter"/>
    <property type="match status" value="1"/>
</dbReference>
<dbReference type="PROSITE" id="PS50850">
    <property type="entry name" value="MFS"/>
    <property type="match status" value="1"/>
</dbReference>
<keyword id="KW-0002">3D-structure</keyword>
<keyword id="KW-0997">Cell inner membrane</keyword>
<keyword id="KW-1003">Cell membrane</keyword>
<keyword id="KW-0472">Membrane</keyword>
<keyword id="KW-1185">Reference proteome</keyword>
<keyword id="KW-0762">Sugar transport</keyword>
<keyword id="KW-0812">Transmembrane</keyword>
<keyword id="KW-1133">Transmembrane helix</keyword>
<keyword id="KW-0813">Transport</keyword>
<gene>
    <name type="primary">sotB</name>
    <name type="synonym">ydeA</name>
    <name type="ordered locus">b1528</name>
    <name type="ordered locus">JW1521</name>
</gene>
<evidence type="ECO:0000255" key="1"/>
<evidence type="ECO:0000305" key="2"/>
<evidence type="ECO:0007829" key="3">
    <source>
        <dbReference type="PDB" id="6KKK"/>
    </source>
</evidence>
<evidence type="ECO:0007829" key="4">
    <source>
        <dbReference type="PDB" id="6KKL"/>
    </source>
</evidence>
<comment type="function">
    <text>Involved in the efflux of sugars. The physiological role may be the reduction of the intracellular concentration of toxic sugars or sugar metabolites. Transports L-arabinose and to a lesser extent IPTG. Seems to contribute to the control of the arabinose regulon.</text>
</comment>
<comment type="subcellular location">
    <subcellularLocation>
        <location>Cell inner membrane</location>
        <topology>Multi-pass membrane protein</topology>
    </subcellularLocation>
</comment>
<comment type="similarity">
    <text evidence="2">Belongs to the major facilitator superfamily. SotB (TC 2.A.1.2) family.</text>
</comment>